<organism>
    <name type="scientific">Xenopus laevis</name>
    <name type="common">African clawed frog</name>
    <dbReference type="NCBI Taxonomy" id="8355"/>
    <lineage>
        <taxon>Eukaryota</taxon>
        <taxon>Metazoa</taxon>
        <taxon>Chordata</taxon>
        <taxon>Craniata</taxon>
        <taxon>Vertebrata</taxon>
        <taxon>Euteleostomi</taxon>
        <taxon>Amphibia</taxon>
        <taxon>Batrachia</taxon>
        <taxon>Anura</taxon>
        <taxon>Pipoidea</taxon>
        <taxon>Pipidae</taxon>
        <taxon>Xenopodinae</taxon>
        <taxon>Xenopus</taxon>
        <taxon>Xenopus</taxon>
    </lineage>
</organism>
<dbReference type="EC" id="2.3.2.27" evidence="1"/>
<dbReference type="EMBL" id="BC089260">
    <property type="protein sequence ID" value="AAH89260.1"/>
    <property type="molecule type" value="mRNA"/>
</dbReference>
<dbReference type="RefSeq" id="NP_001089240.1">
    <property type="nucleotide sequence ID" value="NM_001095771.1"/>
</dbReference>
<dbReference type="SMR" id="Q5FWP4"/>
<dbReference type="BioGRID" id="592068">
    <property type="interactions" value="4"/>
</dbReference>
<dbReference type="IntAct" id="Q5FWP4">
    <property type="interactions" value="2"/>
</dbReference>
<dbReference type="DNASU" id="734287"/>
<dbReference type="GeneID" id="734287"/>
<dbReference type="KEGG" id="xla:734287"/>
<dbReference type="AGR" id="Xenbase:XB-GENE-6251657"/>
<dbReference type="CTD" id="734287"/>
<dbReference type="Xenbase" id="XB-GENE-6251657">
    <property type="gene designation" value="chfr.L"/>
</dbReference>
<dbReference type="OMA" id="SNYWFPG"/>
<dbReference type="OrthoDB" id="1305878at2759"/>
<dbReference type="UniPathway" id="UPA00143"/>
<dbReference type="Proteomes" id="UP000186698">
    <property type="component" value="Chromosome 1L"/>
</dbReference>
<dbReference type="Bgee" id="734287">
    <property type="expression patterns" value="Expressed in blastula and 19 other cell types or tissues"/>
</dbReference>
<dbReference type="GO" id="GO:0005634">
    <property type="term" value="C:nucleus"/>
    <property type="evidence" value="ECO:0000250"/>
    <property type="project" value="UniProtKB"/>
</dbReference>
<dbReference type="GO" id="GO:0016605">
    <property type="term" value="C:PML body"/>
    <property type="evidence" value="ECO:0000314"/>
    <property type="project" value="UniProtKB"/>
</dbReference>
<dbReference type="GO" id="GO:0000166">
    <property type="term" value="F:nucleotide binding"/>
    <property type="evidence" value="ECO:0000250"/>
    <property type="project" value="UniProtKB"/>
</dbReference>
<dbReference type="GO" id="GO:0004842">
    <property type="term" value="F:ubiquitin-protein transferase activity"/>
    <property type="evidence" value="ECO:0000250"/>
    <property type="project" value="UniProtKB"/>
</dbReference>
<dbReference type="GO" id="GO:0008270">
    <property type="term" value="F:zinc ion binding"/>
    <property type="evidence" value="ECO:0007669"/>
    <property type="project" value="UniProtKB-KW"/>
</dbReference>
<dbReference type="GO" id="GO:0051301">
    <property type="term" value="P:cell division"/>
    <property type="evidence" value="ECO:0007669"/>
    <property type="project" value="UniProtKB-KW"/>
</dbReference>
<dbReference type="GO" id="GO:0044818">
    <property type="term" value="P:mitotic G2/M transition checkpoint"/>
    <property type="evidence" value="ECO:0000250"/>
    <property type="project" value="UniProtKB"/>
</dbReference>
<dbReference type="GO" id="GO:0016567">
    <property type="term" value="P:protein ubiquitination"/>
    <property type="evidence" value="ECO:0007669"/>
    <property type="project" value="UniProtKB-UniPathway"/>
</dbReference>
<dbReference type="GO" id="GO:0006511">
    <property type="term" value="P:ubiquitin-dependent protein catabolic process"/>
    <property type="evidence" value="ECO:0000250"/>
    <property type="project" value="UniProtKB"/>
</dbReference>
<dbReference type="CDD" id="cd22672">
    <property type="entry name" value="FHA_CHFR"/>
    <property type="match status" value="1"/>
</dbReference>
<dbReference type="CDD" id="cd16503">
    <property type="entry name" value="RING-HC_CHFR"/>
    <property type="match status" value="1"/>
</dbReference>
<dbReference type="FunFam" id="3.30.40.10:FF:000203">
    <property type="entry name" value="E3 ubiquitin-protein ligase CHFR isoform X1"/>
    <property type="match status" value="1"/>
</dbReference>
<dbReference type="FunFam" id="3.30.40.140:FF:000001">
    <property type="entry name" value="E3 ubiquitin-protein ligase CHFR isoform X1"/>
    <property type="match status" value="1"/>
</dbReference>
<dbReference type="FunFam" id="2.60.200.20:FF:000022">
    <property type="entry name" value="E3 ubiquitin-protein ligase CHFR isoform X2"/>
    <property type="match status" value="1"/>
</dbReference>
<dbReference type="Gene3D" id="2.60.200.20">
    <property type="match status" value="1"/>
</dbReference>
<dbReference type="Gene3D" id="3.30.40.140">
    <property type="match status" value="1"/>
</dbReference>
<dbReference type="Gene3D" id="3.30.40.10">
    <property type="entry name" value="Zinc/RING finger domain, C3HC4 (zinc finger)"/>
    <property type="match status" value="1"/>
</dbReference>
<dbReference type="InterPro" id="IPR040909">
    <property type="entry name" value="CHFR_Znf-CRD"/>
</dbReference>
<dbReference type="InterPro" id="IPR052256">
    <property type="entry name" value="E3_ubiquitin-ligase_CHFR"/>
</dbReference>
<dbReference type="InterPro" id="IPR000253">
    <property type="entry name" value="FHA_dom"/>
</dbReference>
<dbReference type="InterPro" id="IPR008984">
    <property type="entry name" value="SMAD_FHA_dom_sf"/>
</dbReference>
<dbReference type="InterPro" id="IPR001841">
    <property type="entry name" value="Znf_RING"/>
</dbReference>
<dbReference type="InterPro" id="IPR013083">
    <property type="entry name" value="Znf_RING/FYVE/PHD"/>
</dbReference>
<dbReference type="InterPro" id="IPR017907">
    <property type="entry name" value="Znf_RING_CS"/>
</dbReference>
<dbReference type="PANTHER" id="PTHR16079:SF4">
    <property type="entry name" value="E3 UBIQUITIN-PROTEIN LIGASE CHFR"/>
    <property type="match status" value="1"/>
</dbReference>
<dbReference type="PANTHER" id="PTHR16079">
    <property type="entry name" value="UBIQUITIN LIGASE PROTEIN CHFR"/>
    <property type="match status" value="1"/>
</dbReference>
<dbReference type="Pfam" id="PF00498">
    <property type="entry name" value="FHA"/>
    <property type="match status" value="1"/>
</dbReference>
<dbReference type="Pfam" id="PF17979">
    <property type="entry name" value="zf-CRD"/>
    <property type="match status" value="1"/>
</dbReference>
<dbReference type="Pfam" id="PF13639">
    <property type="entry name" value="zf-RING_2"/>
    <property type="match status" value="1"/>
</dbReference>
<dbReference type="SMART" id="SM00240">
    <property type="entry name" value="FHA"/>
    <property type="match status" value="1"/>
</dbReference>
<dbReference type="SMART" id="SM00184">
    <property type="entry name" value="RING"/>
    <property type="match status" value="1"/>
</dbReference>
<dbReference type="SUPFAM" id="SSF57850">
    <property type="entry name" value="RING/U-box"/>
    <property type="match status" value="1"/>
</dbReference>
<dbReference type="SUPFAM" id="SSF49879">
    <property type="entry name" value="SMAD/FHA domain"/>
    <property type="match status" value="1"/>
</dbReference>
<dbReference type="PROSITE" id="PS50006">
    <property type="entry name" value="FHA_DOMAIN"/>
    <property type="match status" value="1"/>
</dbReference>
<dbReference type="PROSITE" id="PS00518">
    <property type="entry name" value="ZF_RING_1"/>
    <property type="match status" value="1"/>
</dbReference>
<dbReference type="PROSITE" id="PS50089">
    <property type="entry name" value="ZF_RING_2"/>
    <property type="match status" value="1"/>
</dbReference>
<keyword id="KW-0131">Cell cycle</keyword>
<keyword id="KW-0132">Cell division</keyword>
<keyword id="KW-0479">Metal-binding</keyword>
<keyword id="KW-0498">Mitosis</keyword>
<keyword id="KW-0539">Nucleus</keyword>
<keyword id="KW-1185">Reference proteome</keyword>
<keyword id="KW-0808">Transferase</keyword>
<keyword id="KW-0833">Ubl conjugation pathway</keyword>
<keyword id="KW-0862">Zinc</keyword>
<keyword id="KW-0863">Zinc-finger</keyword>
<sequence>MEGLDEKKPWGKLSRLLGAETDSSSELFLYKKEWTIGRKKACDLSFPGNKLVSGEHCKITVNEESGEVSLEDTSTNGTVINKLKVIRKQTYPLKNGDVIYVVYRKNEPEQNVAYLYKSLNQGQDSLHDPADTSGSEEAETQTLSSQDDQLSYEEPQPSTSTSSLFSTPTTSAIPGVQLESAEKSGESLGGHSSTSDASPAIRASIPKSNLSTQEQGSLGPPKKRIRTEDHWTTNKNFVPASCPIGASDESKTPSMKPDKMEETLTCIICQELLHDCVSLQPCMHTFCAACYSGWMERSSLCPTCRCPVERICKNHILNNLVEAYLIQHPEKCRSEEDRCSMDARNKITQDMLQPKVRRSFSDEEGSSEDLLELSDVDSESSDISQPYTVCRQCPGFVRHSMQPPPYPPPSDTETSRTQGDAPSTSTNFPTATQEYVCPSHGSHVICTCCFQPMPDRRAEREHNSHVAPQQCTICLEPFCHMYWGCNRMGCFGCLAPFCELNLGDKCLDGVLNNNNYESDILKNYLASRGLTWKDMLNESLAAVQRGVFMLPDYRINGTTVLCYFCGLRNFRILTYQYRQNIPASELPVTVTSRPNCYWGRNCRTQVKAHHAMKFNHICEQTRFKN</sequence>
<feature type="chain" id="PRO_0000385303" description="E3 ubiquitin-protein ligase CHFR">
    <location>
        <begin position="1"/>
        <end position="625"/>
    </location>
</feature>
<feature type="domain" description="FHA" evidence="2">
    <location>
        <begin position="34"/>
        <end position="85"/>
    </location>
</feature>
<feature type="zinc finger region" description="RING-type" evidence="3">
    <location>
        <begin position="266"/>
        <end position="305"/>
    </location>
</feature>
<feature type="zinc finger region" description="PBZ-type">
    <location>
        <begin position="594"/>
        <end position="616"/>
    </location>
</feature>
<feature type="region of interest" description="Disordered" evidence="4">
    <location>
        <begin position="123"/>
        <end position="171"/>
    </location>
</feature>
<feature type="region of interest" description="Disordered" evidence="4">
    <location>
        <begin position="205"/>
        <end position="229"/>
    </location>
</feature>
<feature type="region of interest" description="Disordered" evidence="4">
    <location>
        <begin position="350"/>
        <end position="386"/>
    </location>
</feature>
<feature type="region of interest" description="Disordered" evidence="4">
    <location>
        <begin position="401"/>
        <end position="427"/>
    </location>
</feature>
<feature type="compositionally biased region" description="Polar residues" evidence="4">
    <location>
        <begin position="140"/>
        <end position="149"/>
    </location>
</feature>
<feature type="compositionally biased region" description="Low complexity" evidence="4">
    <location>
        <begin position="158"/>
        <end position="171"/>
    </location>
</feature>
<feature type="compositionally biased region" description="Polar residues" evidence="4">
    <location>
        <begin position="206"/>
        <end position="216"/>
    </location>
</feature>
<feature type="compositionally biased region" description="Acidic residues" evidence="4">
    <location>
        <begin position="362"/>
        <end position="380"/>
    </location>
</feature>
<feature type="compositionally biased region" description="Polar residues" evidence="4">
    <location>
        <begin position="411"/>
        <end position="427"/>
    </location>
</feature>
<evidence type="ECO:0000250" key="1">
    <source>
        <dbReference type="UniProtKB" id="Q96EP1"/>
    </source>
</evidence>
<evidence type="ECO:0000255" key="2">
    <source>
        <dbReference type="PROSITE-ProRule" id="PRU00086"/>
    </source>
</evidence>
<evidence type="ECO:0000255" key="3">
    <source>
        <dbReference type="PROSITE-ProRule" id="PRU00175"/>
    </source>
</evidence>
<evidence type="ECO:0000256" key="4">
    <source>
        <dbReference type="SAM" id="MobiDB-lite"/>
    </source>
</evidence>
<evidence type="ECO:0000269" key="5">
    <source>
    </source>
</evidence>
<evidence type="ECO:0000305" key="6"/>
<protein>
    <recommendedName>
        <fullName>E3 ubiquitin-protein ligase CHFR</fullName>
        <ecNumber evidence="1">2.3.2.27</ecNumber>
    </recommendedName>
    <alternativeName>
        <fullName>Checkpoint with forkhead and RING finger domains protein</fullName>
    </alternativeName>
    <alternativeName>
        <fullName evidence="6">RING-type E3 ubiquitin transferase CHFR</fullName>
    </alternativeName>
</protein>
<proteinExistence type="evidence at protein level"/>
<accession>Q5FWP4</accession>
<gene>
    <name type="primary">chfr</name>
</gene>
<reference key="1">
    <citation type="submission" date="2005-01" db="EMBL/GenBank/DDBJ databases">
        <authorList>
            <consortium name="NIH - Xenopus Gene Collection (XGC) project"/>
        </authorList>
    </citation>
    <scope>NUCLEOTIDE SEQUENCE [LARGE SCALE MRNA]</scope>
    <source>
        <tissue>Egg</tissue>
    </source>
</reference>
<reference key="2">
    <citation type="journal article" date="2004" name="Nat. Struct. Mol. Biol.">
        <title>PML bodies control the nuclear dynamics and function of the CHFR mitotic checkpoint protein.</title>
        <authorList>
            <person name="Daniels M.J."/>
            <person name="Marson A."/>
            <person name="Venkitaraman A.R."/>
        </authorList>
    </citation>
    <scope>SUBCELLULAR LOCATION</scope>
</reference>
<name>CHFR_XENLA</name>
<comment type="function">
    <text evidence="1">E3 ubiquitin-protein ligase that functions in the antephase checkpoint by actively delaying passage into mitosis in response to microtubule poisons. Acts in early prophase before chromosome condensation, when the centrosome move apart from each other along the periphery of the nucleus. Probably involved in signaling the presence of mitotic stress caused by microtubule poisons by mediating the 'Lys-48'-linked ubiquitination of target proteins, leading to their degradation by the proteasome. May also promote the formation of 'Lys-63'-linked polyubiquitin chains and functions with the specific ubiquitin-conjugating ubc13-mms2 (ube2n-ube2v2) heterodimer. Substrates that are polyubiquitinated at 'Lys-63' are usually not targeted for degradation, but are rather involved in signaling cellular stress.</text>
</comment>
<comment type="catalytic activity">
    <reaction evidence="1">
        <text>S-ubiquitinyl-[E2 ubiquitin-conjugating enzyme]-L-cysteine + [acceptor protein]-L-lysine = [E2 ubiquitin-conjugating enzyme]-L-cysteine + N(6)-ubiquitinyl-[acceptor protein]-L-lysine.</text>
        <dbReference type="EC" id="2.3.2.27"/>
    </reaction>
</comment>
<comment type="pathway">
    <text>Protein modification; protein ubiquitination.</text>
</comment>
<comment type="interaction">
    <interactant intactId="EBI-1783502">
        <id>Q5FWP4</id>
    </interactant>
    <interactant intactId="EBI-1783711">
        <id>Q7ZYF2</id>
        <label>tpt1</label>
    </interactant>
    <organismsDiffer>false</organismsDiffer>
    <experiments>3</experiments>
</comment>
<comment type="subcellular location">
    <subcellularLocation>
        <location evidence="5">Nucleus</location>
        <location evidence="5">PML body</location>
    </subcellularLocation>
</comment>
<comment type="domain">
    <text evidence="1">The PBZ-type zinc finger (also named CYR) mediates non-covalent poly(ADP-ribose)-binding. Poly(ADP-ribose)-binding is dependent on the presence of zinc and is required for its function in antephase checkpoint.</text>
</comment>
<comment type="domain">
    <text evidence="1">The FHA domain plays a key role in the anti-proliferative properties of the protein and is involved in initiating a cell cycle arrest at G2/M.</text>
</comment>
<comment type="similarity">
    <text evidence="6">Belongs to the CHFR family.</text>
</comment>